<feature type="chain" id="PRO_0000163340" description="Ribosome maturation factor RimM">
    <location>
        <begin position="1"/>
        <end position="187"/>
    </location>
</feature>
<feature type="domain" description="PRC barrel" evidence="1">
    <location>
        <begin position="96"/>
        <end position="169"/>
    </location>
</feature>
<keyword id="KW-0143">Chaperone</keyword>
<keyword id="KW-0963">Cytoplasm</keyword>
<keyword id="KW-1185">Reference proteome</keyword>
<keyword id="KW-0690">Ribosome biogenesis</keyword>
<keyword id="KW-0698">rRNA processing</keyword>
<gene>
    <name evidence="1" type="primary">rimM</name>
    <name type="ordered locus">R03243</name>
    <name type="ORF">SMc03860</name>
</gene>
<name>RIMM_RHIME</name>
<reference key="1">
    <citation type="journal article" date="2001" name="Proc. Natl. Acad. Sci. U.S.A.">
        <title>Analysis of the chromosome sequence of the legume symbiont Sinorhizobium meliloti strain 1021.</title>
        <authorList>
            <person name="Capela D."/>
            <person name="Barloy-Hubler F."/>
            <person name="Gouzy J."/>
            <person name="Bothe G."/>
            <person name="Ampe F."/>
            <person name="Batut J."/>
            <person name="Boistard P."/>
            <person name="Becker A."/>
            <person name="Boutry M."/>
            <person name="Cadieu E."/>
            <person name="Dreano S."/>
            <person name="Gloux S."/>
            <person name="Godrie T."/>
            <person name="Goffeau A."/>
            <person name="Kahn D."/>
            <person name="Kiss E."/>
            <person name="Lelaure V."/>
            <person name="Masuy D."/>
            <person name="Pohl T."/>
            <person name="Portetelle D."/>
            <person name="Puehler A."/>
            <person name="Purnelle B."/>
            <person name="Ramsperger U."/>
            <person name="Renard C."/>
            <person name="Thebault P."/>
            <person name="Vandenbol M."/>
            <person name="Weidner S."/>
            <person name="Galibert F."/>
        </authorList>
    </citation>
    <scope>NUCLEOTIDE SEQUENCE [LARGE SCALE GENOMIC DNA]</scope>
    <source>
        <strain>1021</strain>
    </source>
</reference>
<reference key="2">
    <citation type="journal article" date="2001" name="Science">
        <title>The composite genome of the legume symbiont Sinorhizobium meliloti.</title>
        <authorList>
            <person name="Galibert F."/>
            <person name="Finan T.M."/>
            <person name="Long S.R."/>
            <person name="Puehler A."/>
            <person name="Abola P."/>
            <person name="Ampe F."/>
            <person name="Barloy-Hubler F."/>
            <person name="Barnett M.J."/>
            <person name="Becker A."/>
            <person name="Boistard P."/>
            <person name="Bothe G."/>
            <person name="Boutry M."/>
            <person name="Bowser L."/>
            <person name="Buhrmester J."/>
            <person name="Cadieu E."/>
            <person name="Capela D."/>
            <person name="Chain P."/>
            <person name="Cowie A."/>
            <person name="Davis R.W."/>
            <person name="Dreano S."/>
            <person name="Federspiel N.A."/>
            <person name="Fisher R.F."/>
            <person name="Gloux S."/>
            <person name="Godrie T."/>
            <person name="Goffeau A."/>
            <person name="Golding B."/>
            <person name="Gouzy J."/>
            <person name="Gurjal M."/>
            <person name="Hernandez-Lucas I."/>
            <person name="Hong A."/>
            <person name="Huizar L."/>
            <person name="Hyman R.W."/>
            <person name="Jones T."/>
            <person name="Kahn D."/>
            <person name="Kahn M.L."/>
            <person name="Kalman S."/>
            <person name="Keating D.H."/>
            <person name="Kiss E."/>
            <person name="Komp C."/>
            <person name="Lelaure V."/>
            <person name="Masuy D."/>
            <person name="Palm C."/>
            <person name="Peck M.C."/>
            <person name="Pohl T.M."/>
            <person name="Portetelle D."/>
            <person name="Purnelle B."/>
            <person name="Ramsperger U."/>
            <person name="Surzycki R."/>
            <person name="Thebault P."/>
            <person name="Vandenbol M."/>
            <person name="Vorhoelter F.J."/>
            <person name="Weidner S."/>
            <person name="Wells D.H."/>
            <person name="Wong K."/>
            <person name="Yeh K.-C."/>
            <person name="Batut J."/>
        </authorList>
    </citation>
    <scope>NUCLEOTIDE SEQUENCE [LARGE SCALE GENOMIC DNA]</scope>
    <source>
        <strain>1021</strain>
    </source>
</reference>
<evidence type="ECO:0000255" key="1">
    <source>
        <dbReference type="HAMAP-Rule" id="MF_00014"/>
    </source>
</evidence>
<dbReference type="EMBL" id="AL591688">
    <property type="protein sequence ID" value="CAC47822.1"/>
    <property type="molecule type" value="Genomic_DNA"/>
</dbReference>
<dbReference type="RefSeq" id="NP_387349.1">
    <property type="nucleotide sequence ID" value="NC_003047.1"/>
</dbReference>
<dbReference type="RefSeq" id="WP_010970516.1">
    <property type="nucleotide sequence ID" value="NC_003047.1"/>
</dbReference>
<dbReference type="SMR" id="Q92L42"/>
<dbReference type="EnsemblBacteria" id="CAC47822">
    <property type="protein sequence ID" value="CAC47822"/>
    <property type="gene ID" value="SMc03860"/>
</dbReference>
<dbReference type="GeneID" id="89574221"/>
<dbReference type="KEGG" id="sme:SMc03860"/>
<dbReference type="PATRIC" id="fig|266834.11.peg.4796"/>
<dbReference type="eggNOG" id="COG0806">
    <property type="taxonomic scope" value="Bacteria"/>
</dbReference>
<dbReference type="HOGENOM" id="CLU_077636_0_1_5"/>
<dbReference type="OrthoDB" id="9788191at2"/>
<dbReference type="Proteomes" id="UP000001976">
    <property type="component" value="Chromosome"/>
</dbReference>
<dbReference type="GO" id="GO:0005737">
    <property type="term" value="C:cytoplasm"/>
    <property type="evidence" value="ECO:0007669"/>
    <property type="project" value="UniProtKB-SubCell"/>
</dbReference>
<dbReference type="GO" id="GO:0005840">
    <property type="term" value="C:ribosome"/>
    <property type="evidence" value="ECO:0007669"/>
    <property type="project" value="InterPro"/>
</dbReference>
<dbReference type="GO" id="GO:0043022">
    <property type="term" value="F:ribosome binding"/>
    <property type="evidence" value="ECO:0007669"/>
    <property type="project" value="InterPro"/>
</dbReference>
<dbReference type="GO" id="GO:0042274">
    <property type="term" value="P:ribosomal small subunit biogenesis"/>
    <property type="evidence" value="ECO:0007669"/>
    <property type="project" value="UniProtKB-UniRule"/>
</dbReference>
<dbReference type="GO" id="GO:0006364">
    <property type="term" value="P:rRNA processing"/>
    <property type="evidence" value="ECO:0007669"/>
    <property type="project" value="UniProtKB-UniRule"/>
</dbReference>
<dbReference type="Gene3D" id="2.30.30.240">
    <property type="entry name" value="PRC-barrel domain"/>
    <property type="match status" value="1"/>
</dbReference>
<dbReference type="Gene3D" id="2.40.30.60">
    <property type="entry name" value="RimM"/>
    <property type="match status" value="1"/>
</dbReference>
<dbReference type="HAMAP" id="MF_00014">
    <property type="entry name" value="Ribosome_mat_RimM"/>
    <property type="match status" value="1"/>
</dbReference>
<dbReference type="InterPro" id="IPR027275">
    <property type="entry name" value="PRC-brl_dom"/>
</dbReference>
<dbReference type="InterPro" id="IPR011033">
    <property type="entry name" value="PRC_barrel-like_sf"/>
</dbReference>
<dbReference type="InterPro" id="IPR011961">
    <property type="entry name" value="RimM"/>
</dbReference>
<dbReference type="InterPro" id="IPR002676">
    <property type="entry name" value="RimM_N"/>
</dbReference>
<dbReference type="InterPro" id="IPR036976">
    <property type="entry name" value="RimM_N_sf"/>
</dbReference>
<dbReference type="InterPro" id="IPR009000">
    <property type="entry name" value="Transl_B-barrel_sf"/>
</dbReference>
<dbReference type="NCBIfam" id="TIGR02273">
    <property type="entry name" value="16S_RimM"/>
    <property type="match status" value="1"/>
</dbReference>
<dbReference type="PANTHER" id="PTHR33692">
    <property type="entry name" value="RIBOSOME MATURATION FACTOR RIMM"/>
    <property type="match status" value="1"/>
</dbReference>
<dbReference type="PANTHER" id="PTHR33692:SF1">
    <property type="entry name" value="RIBOSOME MATURATION FACTOR RIMM"/>
    <property type="match status" value="1"/>
</dbReference>
<dbReference type="Pfam" id="PF05239">
    <property type="entry name" value="PRC"/>
    <property type="match status" value="1"/>
</dbReference>
<dbReference type="Pfam" id="PF01782">
    <property type="entry name" value="RimM"/>
    <property type="match status" value="1"/>
</dbReference>
<dbReference type="SUPFAM" id="SSF50346">
    <property type="entry name" value="PRC-barrel domain"/>
    <property type="match status" value="1"/>
</dbReference>
<dbReference type="SUPFAM" id="SSF50447">
    <property type="entry name" value="Translation proteins"/>
    <property type="match status" value="1"/>
</dbReference>
<protein>
    <recommendedName>
        <fullName evidence="1">Ribosome maturation factor RimM</fullName>
    </recommendedName>
</protein>
<sequence length="187" mass="20366">MTQLKNPVLMATIGAAQGLRGEVRVKSFTDDPAALGDYGNLHSEDGRVFEVLEIREAKNVVVVRFRGINDRTAAEALNGLELFIERDNLPDDDLDEDEFFYADLEGLEAVDRTGKSYGSVTGVFDFGAGDLLELKGPGLRPVLIPFTEWSVLEIDLEAGKLVIDPTAAGLVDDEKSGPGKPFPTKRK</sequence>
<accession>Q92L42</accession>
<proteinExistence type="inferred from homology"/>
<comment type="function">
    <text evidence="1">An accessory protein needed during the final step in the assembly of 30S ribosomal subunit, possibly for assembly of the head region. Essential for efficient processing of 16S rRNA. May be needed both before and after RbfA during the maturation of 16S rRNA. It has affinity for free ribosomal 30S subunits but not for 70S ribosomes.</text>
</comment>
<comment type="subunit">
    <text evidence="1">Binds ribosomal protein uS19.</text>
</comment>
<comment type="subcellular location">
    <subcellularLocation>
        <location evidence="1">Cytoplasm</location>
    </subcellularLocation>
</comment>
<comment type="domain">
    <text evidence="1">The PRC barrel domain binds ribosomal protein uS19.</text>
</comment>
<comment type="similarity">
    <text evidence="1">Belongs to the RimM family.</text>
</comment>
<organism>
    <name type="scientific">Rhizobium meliloti (strain 1021)</name>
    <name type="common">Ensifer meliloti</name>
    <name type="synonym">Sinorhizobium meliloti</name>
    <dbReference type="NCBI Taxonomy" id="266834"/>
    <lineage>
        <taxon>Bacteria</taxon>
        <taxon>Pseudomonadati</taxon>
        <taxon>Pseudomonadota</taxon>
        <taxon>Alphaproteobacteria</taxon>
        <taxon>Hyphomicrobiales</taxon>
        <taxon>Rhizobiaceae</taxon>
        <taxon>Sinorhizobium/Ensifer group</taxon>
        <taxon>Sinorhizobium</taxon>
    </lineage>
</organism>